<proteinExistence type="evidence at protein level"/>
<reference key="1">
    <citation type="journal article" date="2012" name="Phytochemistry">
        <title>Molecular cloning and functional analysis of the ortho-hydroxylases of p-coumaroyl coenzyme A/feruloyl coenzyme A involved in formation of umbelliferone and scopoletin in sweet potato, Ipomoea batatas (L.) Lam.</title>
        <authorList>
            <person name="Matsumoto S."/>
            <person name="Mizutani M."/>
            <person name="Sakata K."/>
            <person name="Shimizu B."/>
        </authorList>
    </citation>
    <scope>NUCLEOTIDE SEQUENCE [MRNA]</scope>
    <scope>FUNCTION</scope>
    <scope>CATALYTIC ACTIVITY</scope>
    <scope>BIOPHYSICOCHEMICAL PROPERTIES</scope>
    <scope>TISSUE SPECIFICITY</scope>
    <source>
        <tissue>Root tuber</tissue>
    </source>
</reference>
<comment type="function">
    <text evidence="4">2-oxoglutarate (OG)- and Fe(II)-dependent dioxygenase (2OGD) involved in scopoletin biosynthesis (PubMed:22169019). Converts feruloyl CoA into 6'-hydroxyferuloyl CoA, and, at low efficiency, caffeoyl-CoA into 6'-hydroxycaffeate, but has no activity with p-coumaroyl-CoA (PubMed:22169019).</text>
</comment>
<comment type="catalytic activity">
    <reaction evidence="4">
        <text>(E)-feruloyl-CoA + 2-oxoglutarate + O2 = (E)-6-hydroxyferuloyl-CoA + succinate + CO2</text>
        <dbReference type="Rhea" id="RHEA:57856"/>
        <dbReference type="ChEBI" id="CHEBI:15379"/>
        <dbReference type="ChEBI" id="CHEBI:16526"/>
        <dbReference type="ChEBI" id="CHEBI:16810"/>
        <dbReference type="ChEBI" id="CHEBI:30031"/>
        <dbReference type="ChEBI" id="CHEBI:87305"/>
        <dbReference type="ChEBI" id="CHEBI:142390"/>
        <dbReference type="EC" id="1.14.11.61"/>
    </reaction>
</comment>
<comment type="cofactor">
    <cofactor evidence="2">
        <name>L-ascorbate</name>
        <dbReference type="ChEBI" id="CHEBI:38290"/>
    </cofactor>
</comment>
<comment type="cofactor">
    <cofactor evidence="3">
        <name>Fe(2+)</name>
        <dbReference type="ChEBI" id="CHEBI:29033"/>
    </cofactor>
    <text evidence="3">Binds 1 Fe(2+) ion per subunit.</text>
</comment>
<comment type="biophysicochemical properties">
    <kinetics>
        <KM evidence="4">9.15 uM for feruloyl-CoA</KM>
        <text evidence="4">kcat is 2.68 sec(-1) with feruloyl-CoA as substrate.</text>
    </kinetics>
    <phDependence>
        <text evidence="4">Optimum pH is 6.5.</text>
    </phDependence>
</comment>
<comment type="pathway">
    <text evidence="4">Phenylpropanoid metabolism.</text>
</comment>
<comment type="tissue specificity">
    <text evidence="4">Expressed at low levels in tubers, underground stems, leaves and petioles.</text>
</comment>
<comment type="induction">
    <text evidence="4">Transiently induced by fungal (F.oxysporum f.sp. batatas O-17) and chitosan treatments, in association with the accumulation of umbelliferone and its glucoside (skimmin) in the tubers.</text>
</comment>
<comment type="similarity">
    <text evidence="6">Belongs to the iron/ascorbate-dependent oxidoreductase family.</text>
</comment>
<organism>
    <name type="scientific">Ipomoea batatas</name>
    <name type="common">Sweet potato</name>
    <name type="synonym">Convolvulus batatas</name>
    <dbReference type="NCBI Taxonomy" id="4120"/>
    <lineage>
        <taxon>Eukaryota</taxon>
        <taxon>Viridiplantae</taxon>
        <taxon>Streptophyta</taxon>
        <taxon>Embryophyta</taxon>
        <taxon>Tracheophyta</taxon>
        <taxon>Spermatophyta</taxon>
        <taxon>Magnoliopsida</taxon>
        <taxon>eudicotyledons</taxon>
        <taxon>Gunneridae</taxon>
        <taxon>Pentapetalae</taxon>
        <taxon>asterids</taxon>
        <taxon>lamiids</taxon>
        <taxon>Solanales</taxon>
        <taxon>Convolvulaceae</taxon>
        <taxon>Ipomoeeae</taxon>
        <taxon>Ipomoea</taxon>
    </lineage>
</organism>
<feature type="chain" id="PRO_0000447354" description="Feruloyl CoA ortho-hydroxylase F6H1-2">
    <location>
        <begin position="1"/>
        <end position="358"/>
    </location>
</feature>
<feature type="domain" description="Fe2OG dioxygenase" evidence="3">
    <location>
        <begin position="200"/>
        <end position="308"/>
    </location>
</feature>
<feature type="binding site" evidence="1">
    <location>
        <position position="216"/>
    </location>
    <ligand>
        <name>2-oxoglutarate</name>
        <dbReference type="ChEBI" id="CHEBI:16810"/>
    </ligand>
</feature>
<feature type="binding site" evidence="3">
    <location>
        <position position="231"/>
    </location>
    <ligand>
        <name>Fe cation</name>
        <dbReference type="ChEBI" id="CHEBI:24875"/>
    </ligand>
</feature>
<feature type="binding site" evidence="3">
    <location>
        <position position="233"/>
    </location>
    <ligand>
        <name>Fe cation</name>
        <dbReference type="ChEBI" id="CHEBI:24875"/>
    </ligand>
</feature>
<feature type="binding site" evidence="3">
    <location>
        <position position="289"/>
    </location>
    <ligand>
        <name>Fe cation</name>
        <dbReference type="ChEBI" id="CHEBI:24875"/>
    </ligand>
</feature>
<feature type="binding site" evidence="3">
    <location>
        <position position="299"/>
    </location>
    <ligand>
        <name>2-oxoglutarate</name>
        <dbReference type="ChEBI" id="CHEBI:16810"/>
    </ligand>
</feature>
<feature type="binding site" evidence="1">
    <location>
        <position position="301"/>
    </location>
    <ligand>
        <name>2-oxoglutarate</name>
        <dbReference type="ChEBI" id="CHEBI:16810"/>
    </ligand>
</feature>
<sequence length="358" mass="39934">MPAVLSSVLSNITDFVVHEGNGVKGLADMGLEALPKQYVQPEEERITTSTVIVDDTIPVIDLSEWGSDPKVGDMICEAAEKWGFFQIVNHGVPLEVLEEVKAATYRFFRLPAEEKNKHCKDNSPSNNVRYGTSFTPHAEKALEWKDFLSLFYVSDEEAAALWPSACRDEALTFMRNCDAVIKRLLKSLMKGLNVTEIDGTKESLLMGSKRINMNYYPKCPNPELTVGVGRHSDVSTLTILLQDQIGGLYVRKLDSDTWVHVPPINGAIVINVGDALQILSNGRYKSIEHRVIANGSNNRISVPIFVNPRPNDIIGPLPELLESGEKAVYKNVLYSDYVKHFFRKAHDGKETVDFAKIN</sequence>
<evidence type="ECO:0000250" key="1">
    <source>
        <dbReference type="UniProtKB" id="D4N500"/>
    </source>
</evidence>
<evidence type="ECO:0000250" key="2">
    <source>
        <dbReference type="UniProtKB" id="Q9C899"/>
    </source>
</evidence>
<evidence type="ECO:0000255" key="3">
    <source>
        <dbReference type="PROSITE-ProRule" id="PRU00805"/>
    </source>
</evidence>
<evidence type="ECO:0000269" key="4">
    <source>
    </source>
</evidence>
<evidence type="ECO:0000303" key="5">
    <source>
    </source>
</evidence>
<evidence type="ECO:0000305" key="6"/>
<keyword id="KW-0223">Dioxygenase</keyword>
<keyword id="KW-0408">Iron</keyword>
<keyword id="KW-0479">Metal-binding</keyword>
<keyword id="KW-0560">Oxidoreductase</keyword>
<gene>
    <name evidence="5" type="primary">F6H1-2</name>
</gene>
<protein>
    <recommendedName>
        <fullName evidence="5">Feruloyl CoA ortho-hydroxylase F6H1-2</fullName>
        <shortName evidence="5">IbF6H1-2</shortName>
        <ecNumber evidence="3 4">1.14.11.61</ecNumber>
    </recommendedName>
    <alternativeName>
        <fullName evidence="5">2-oxoglutarate-dependent dioxygenase F6H1-2</fullName>
        <shortName evidence="5">2OGD F6H1-2</shortName>
    </alternativeName>
</protein>
<accession>G9M9M1</accession>
<name>F6H12_IPOBA</name>
<dbReference type="EC" id="1.14.11.61" evidence="3 4"/>
<dbReference type="EMBL" id="AB636150">
    <property type="protein sequence ID" value="BAL22344.1"/>
    <property type="molecule type" value="mRNA"/>
</dbReference>
<dbReference type="SMR" id="G9M9M1"/>
<dbReference type="BRENDA" id="1.14.11.61">
    <property type="organism ID" value="2773"/>
</dbReference>
<dbReference type="GO" id="GO:0016706">
    <property type="term" value="F:2-oxoglutarate-dependent dioxygenase activity"/>
    <property type="evidence" value="ECO:0000314"/>
    <property type="project" value="UniProtKB"/>
</dbReference>
<dbReference type="GO" id="GO:0046872">
    <property type="term" value="F:metal ion binding"/>
    <property type="evidence" value="ECO:0007669"/>
    <property type="project" value="UniProtKB-KW"/>
</dbReference>
<dbReference type="GO" id="GO:0009805">
    <property type="term" value="P:coumarin biosynthetic process"/>
    <property type="evidence" value="ECO:0000314"/>
    <property type="project" value="UniProtKB"/>
</dbReference>
<dbReference type="GO" id="GO:0009699">
    <property type="term" value="P:phenylpropanoid biosynthetic process"/>
    <property type="evidence" value="ECO:0000314"/>
    <property type="project" value="UniProtKB"/>
</dbReference>
<dbReference type="GO" id="GO:0009620">
    <property type="term" value="P:response to fungus"/>
    <property type="evidence" value="ECO:0000270"/>
    <property type="project" value="UniProtKB"/>
</dbReference>
<dbReference type="GO" id="GO:0002238">
    <property type="term" value="P:response to molecule of fungal origin"/>
    <property type="evidence" value="ECO:0000270"/>
    <property type="project" value="UniProtKB"/>
</dbReference>
<dbReference type="FunFam" id="2.60.120.330:FF:000023">
    <property type="entry name" value="Feruloyl CoA ortho-hydroxylase 1"/>
    <property type="match status" value="1"/>
</dbReference>
<dbReference type="Gene3D" id="2.60.120.330">
    <property type="entry name" value="B-lactam Antibiotic, Isopenicillin N Synthase, Chain"/>
    <property type="match status" value="1"/>
</dbReference>
<dbReference type="InterPro" id="IPR026992">
    <property type="entry name" value="DIOX_N"/>
</dbReference>
<dbReference type="InterPro" id="IPR044861">
    <property type="entry name" value="IPNS-like_FE2OG_OXY"/>
</dbReference>
<dbReference type="InterPro" id="IPR027443">
    <property type="entry name" value="IPNS-like_sf"/>
</dbReference>
<dbReference type="InterPro" id="IPR005123">
    <property type="entry name" value="Oxoglu/Fe-dep_dioxygenase_dom"/>
</dbReference>
<dbReference type="InterPro" id="IPR050295">
    <property type="entry name" value="Plant_2OG-oxidoreductases"/>
</dbReference>
<dbReference type="PANTHER" id="PTHR47991">
    <property type="entry name" value="OXOGLUTARATE/IRON-DEPENDENT DIOXYGENASE"/>
    <property type="match status" value="1"/>
</dbReference>
<dbReference type="Pfam" id="PF03171">
    <property type="entry name" value="2OG-FeII_Oxy"/>
    <property type="match status" value="1"/>
</dbReference>
<dbReference type="Pfam" id="PF14226">
    <property type="entry name" value="DIOX_N"/>
    <property type="match status" value="1"/>
</dbReference>
<dbReference type="SUPFAM" id="SSF51197">
    <property type="entry name" value="Clavaminate synthase-like"/>
    <property type="match status" value="1"/>
</dbReference>
<dbReference type="PROSITE" id="PS51471">
    <property type="entry name" value="FE2OG_OXY"/>
    <property type="match status" value="1"/>
</dbReference>